<name>MSHA_CORK4</name>
<feature type="chain" id="PRO_0000400120" description="D-inositol 3-phosphate glycosyltransferase">
    <location>
        <begin position="1"/>
        <end position="451"/>
    </location>
</feature>
<feature type="binding site" evidence="1">
    <location>
        <position position="37"/>
    </location>
    <ligand>
        <name>1D-myo-inositol 3-phosphate</name>
        <dbReference type="ChEBI" id="CHEBI:58401"/>
    </ligand>
</feature>
<feature type="binding site" evidence="1">
    <location>
        <begin position="43"/>
        <end position="44"/>
    </location>
    <ligand>
        <name>UDP-N-acetyl-alpha-D-glucosamine</name>
        <dbReference type="ChEBI" id="CHEBI:57705"/>
    </ligand>
</feature>
<feature type="binding site" evidence="1">
    <location>
        <begin position="48"/>
        <end position="53"/>
    </location>
    <ligand>
        <name>1D-myo-inositol 3-phosphate</name>
        <dbReference type="ChEBI" id="CHEBI:58401"/>
    </ligand>
</feature>
<feature type="binding site" evidence="1">
    <location>
        <position position="51"/>
    </location>
    <ligand>
        <name>UDP-N-acetyl-alpha-D-glucosamine</name>
        <dbReference type="ChEBI" id="CHEBI:57705"/>
    </ligand>
</feature>
<feature type="binding site" evidence="1">
    <location>
        <position position="106"/>
    </location>
    <ligand>
        <name>1D-myo-inositol 3-phosphate</name>
        <dbReference type="ChEBI" id="CHEBI:58401"/>
    </ligand>
</feature>
<feature type="binding site" evidence="1">
    <location>
        <position position="138"/>
    </location>
    <ligand>
        <name>1D-myo-inositol 3-phosphate</name>
        <dbReference type="ChEBI" id="CHEBI:58401"/>
    </ligand>
</feature>
<feature type="binding site" evidence="1">
    <location>
        <position position="162"/>
    </location>
    <ligand>
        <name>1D-myo-inositol 3-phosphate</name>
        <dbReference type="ChEBI" id="CHEBI:58401"/>
    </ligand>
</feature>
<feature type="binding site" evidence="1">
    <location>
        <position position="182"/>
    </location>
    <ligand>
        <name>1D-myo-inositol 3-phosphate</name>
        <dbReference type="ChEBI" id="CHEBI:58401"/>
    </ligand>
</feature>
<feature type="binding site" evidence="1">
    <location>
        <position position="259"/>
    </location>
    <ligand>
        <name>UDP-N-acetyl-alpha-D-glucosamine</name>
        <dbReference type="ChEBI" id="CHEBI:57705"/>
    </ligand>
</feature>
<feature type="binding site" evidence="1">
    <location>
        <position position="264"/>
    </location>
    <ligand>
        <name>UDP-N-acetyl-alpha-D-glucosamine</name>
        <dbReference type="ChEBI" id="CHEBI:57705"/>
    </ligand>
</feature>
<feature type="binding site" evidence="1">
    <location>
        <position position="323"/>
    </location>
    <ligand>
        <name>UDP-N-acetyl-alpha-D-glucosamine</name>
        <dbReference type="ChEBI" id="CHEBI:57705"/>
    </ligand>
</feature>
<feature type="binding site" evidence="1">
    <location>
        <position position="332"/>
    </location>
    <ligand>
        <name>Mg(2+)</name>
        <dbReference type="ChEBI" id="CHEBI:18420"/>
    </ligand>
</feature>
<feature type="binding site" evidence="1">
    <location>
        <position position="333"/>
    </location>
    <ligand>
        <name>Mg(2+)</name>
        <dbReference type="ChEBI" id="CHEBI:18420"/>
    </ligand>
</feature>
<feature type="binding site" evidence="1">
    <location>
        <position position="335"/>
    </location>
    <ligand>
        <name>Mg(2+)</name>
        <dbReference type="ChEBI" id="CHEBI:18420"/>
    </ligand>
</feature>
<feature type="binding site" evidence="1">
    <location>
        <position position="345"/>
    </location>
    <ligand>
        <name>UDP-N-acetyl-alpha-D-glucosamine</name>
        <dbReference type="ChEBI" id="CHEBI:57705"/>
    </ligand>
</feature>
<feature type="binding site" evidence="1">
    <location>
        <position position="353"/>
    </location>
    <ligand>
        <name>UDP-N-acetyl-alpha-D-glucosamine</name>
        <dbReference type="ChEBI" id="CHEBI:57705"/>
    </ligand>
</feature>
<feature type="binding site" evidence="1">
    <location>
        <position position="359"/>
    </location>
    <ligand>
        <name>Mg(2+)</name>
        <dbReference type="ChEBI" id="CHEBI:18420"/>
    </ligand>
</feature>
<protein>
    <recommendedName>
        <fullName>D-inositol 3-phosphate glycosyltransferase</fullName>
        <ecNumber evidence="1">2.4.1.250</ecNumber>
    </recommendedName>
    <alternativeName>
        <fullName evidence="1">N-acetylglucosamine-inositol-phosphate N-acetylglucosaminyltransferase</fullName>
        <shortName evidence="1">GlcNAc-Ins-P N-acetylglucosaminyltransferase</shortName>
    </alternativeName>
</protein>
<organism>
    <name type="scientific">Corynebacterium kroppenstedtii (strain DSM 44385 / JCM 11950 / CIP 105744 / CCUG 35717)</name>
    <dbReference type="NCBI Taxonomy" id="645127"/>
    <lineage>
        <taxon>Bacteria</taxon>
        <taxon>Bacillati</taxon>
        <taxon>Actinomycetota</taxon>
        <taxon>Actinomycetes</taxon>
        <taxon>Mycobacteriales</taxon>
        <taxon>Corynebacteriaceae</taxon>
        <taxon>Corynebacterium</taxon>
    </lineage>
</organism>
<evidence type="ECO:0000255" key="1">
    <source>
        <dbReference type="HAMAP-Rule" id="MF_01695"/>
    </source>
</evidence>
<proteinExistence type="inferred from homology"/>
<reference key="1">
    <citation type="journal article" date="2008" name="J. Biotechnol.">
        <title>Ultrafast pyrosequencing of Corynebacterium kroppenstedtii DSM44385 revealed insights into the physiology of a lipophilic corynebacterium that lacks mycolic acids.</title>
        <authorList>
            <person name="Tauch A."/>
            <person name="Schneider J."/>
            <person name="Szczepanowski R."/>
            <person name="Tilker A."/>
            <person name="Viehoever P."/>
            <person name="Gartemann K.-H."/>
            <person name="Arnold W."/>
            <person name="Blom J."/>
            <person name="Brinkrolf K."/>
            <person name="Brune I."/>
            <person name="Goetker S."/>
            <person name="Weisshaar B."/>
            <person name="Goesmann A."/>
            <person name="Droege M."/>
            <person name="Puehler A."/>
        </authorList>
    </citation>
    <scope>NUCLEOTIDE SEQUENCE [LARGE SCALE GENOMIC DNA]</scope>
    <source>
        <strain>DSM 44385 / JCM 11950 / CIP 105744 / CCUG 35717</strain>
    </source>
</reference>
<gene>
    <name evidence="1" type="primary">mshA</name>
    <name type="ordered locus">ckrop_1927</name>
</gene>
<keyword id="KW-0328">Glycosyltransferase</keyword>
<keyword id="KW-0460">Magnesium</keyword>
<keyword id="KW-0479">Metal-binding</keyword>
<keyword id="KW-1185">Reference proteome</keyword>
<keyword id="KW-0808">Transferase</keyword>
<dbReference type="EC" id="2.4.1.250" evidence="1"/>
<dbReference type="EMBL" id="CP001620">
    <property type="protein sequence ID" value="ACR18641.1"/>
    <property type="molecule type" value="Genomic_DNA"/>
</dbReference>
<dbReference type="SMR" id="C4LLD6"/>
<dbReference type="STRING" id="645127.ckrop_1927"/>
<dbReference type="CAZy" id="GT4">
    <property type="family name" value="Glycosyltransferase Family 4"/>
</dbReference>
<dbReference type="KEGG" id="ckp:ckrop_1927"/>
<dbReference type="eggNOG" id="COG0438">
    <property type="taxonomic scope" value="Bacteria"/>
</dbReference>
<dbReference type="HOGENOM" id="CLU_009583_2_3_11"/>
<dbReference type="OrthoDB" id="9810929at2"/>
<dbReference type="Proteomes" id="UP000001473">
    <property type="component" value="Chromosome"/>
</dbReference>
<dbReference type="GO" id="GO:0008375">
    <property type="term" value="F:acetylglucosaminyltransferase activity"/>
    <property type="evidence" value="ECO:0007669"/>
    <property type="project" value="UniProtKB-UniRule"/>
</dbReference>
<dbReference type="GO" id="GO:0102710">
    <property type="term" value="F:D-inositol-3-phosphate glycosyltransferase activity"/>
    <property type="evidence" value="ECO:0007669"/>
    <property type="project" value="UniProtKB-EC"/>
</dbReference>
<dbReference type="GO" id="GO:0000287">
    <property type="term" value="F:magnesium ion binding"/>
    <property type="evidence" value="ECO:0007669"/>
    <property type="project" value="UniProtKB-UniRule"/>
</dbReference>
<dbReference type="GO" id="GO:1903509">
    <property type="term" value="P:liposaccharide metabolic process"/>
    <property type="evidence" value="ECO:0007669"/>
    <property type="project" value="UniProtKB-ARBA"/>
</dbReference>
<dbReference type="GO" id="GO:0010125">
    <property type="term" value="P:mycothiol biosynthetic process"/>
    <property type="evidence" value="ECO:0007669"/>
    <property type="project" value="UniProtKB-UniRule"/>
</dbReference>
<dbReference type="CDD" id="cd03800">
    <property type="entry name" value="GT4_sucrose_synthase"/>
    <property type="match status" value="1"/>
</dbReference>
<dbReference type="Gene3D" id="3.40.50.2000">
    <property type="entry name" value="Glycogen Phosphorylase B"/>
    <property type="match status" value="2"/>
</dbReference>
<dbReference type="HAMAP" id="MF_01695">
    <property type="entry name" value="MshA"/>
    <property type="match status" value="1"/>
</dbReference>
<dbReference type="InterPro" id="IPR001296">
    <property type="entry name" value="Glyco_trans_1"/>
</dbReference>
<dbReference type="InterPro" id="IPR028098">
    <property type="entry name" value="Glyco_trans_4-like_N"/>
</dbReference>
<dbReference type="InterPro" id="IPR050194">
    <property type="entry name" value="Glycosyltransferase_grp1"/>
</dbReference>
<dbReference type="InterPro" id="IPR017814">
    <property type="entry name" value="Mycothiol_biosynthesis_MshA"/>
</dbReference>
<dbReference type="NCBIfam" id="TIGR03449">
    <property type="entry name" value="mycothiol_MshA"/>
    <property type="match status" value="1"/>
</dbReference>
<dbReference type="PANTHER" id="PTHR45947">
    <property type="entry name" value="SULFOQUINOVOSYL TRANSFERASE SQD2"/>
    <property type="match status" value="1"/>
</dbReference>
<dbReference type="PANTHER" id="PTHR45947:SF3">
    <property type="entry name" value="SULFOQUINOVOSYL TRANSFERASE SQD2"/>
    <property type="match status" value="1"/>
</dbReference>
<dbReference type="Pfam" id="PF13579">
    <property type="entry name" value="Glyco_trans_4_4"/>
    <property type="match status" value="1"/>
</dbReference>
<dbReference type="Pfam" id="PF00534">
    <property type="entry name" value="Glycos_transf_1"/>
    <property type="match status" value="1"/>
</dbReference>
<dbReference type="SUPFAM" id="SSF53756">
    <property type="entry name" value="UDP-Glycosyltransferase/glycogen phosphorylase"/>
    <property type="match status" value="1"/>
</dbReference>
<accession>C4LLD6</accession>
<sequence>MHQAGASTRRLHGVAILSTLKSMSTTPRGRIAVISMHTSPIEQPGVGDAGGMNVYIRSTSLELGALGYEVDIFTRATRSSQGKIVQLAPNVRLINIIAGPYEGLSKEELPTQMVAFTSGIIEFAQCEKVSYSLIHSHYWMSGQVGWLLRDLWRVPQVHTAHTLALVKNSALATGDRPEPESRRICEQQIVDNADRLVVNTEAGKDNLVFHYDADPEHIDVVLPGADVTQFSPGSDRATERSRRELGVPLHATVIAFVGRMQRLKGPQVLLRAVANMMKKHPDQELRVLMCGGPSGNGLARPTEFEDLARDLGIDPIVRFLAPRPPEDLASVYRAADIVAIPSYNESFGLVAVEAQASGTPVVAARAGGLPITIDDGTSGILVDGHDPADWATALQSLCDDDDRRIAMGENATDHASRFSWASSARHLSDIYEDAIRKGPHVRCGSDRAGAS</sequence>
<comment type="function">
    <text evidence="1">Catalyzes the transfer of a N-acetyl-glucosamine moiety to 1D-myo-inositol 3-phosphate to produce 1D-myo-inositol 2-acetamido-2-deoxy-glucopyranoside 3-phosphate in the mycothiol biosynthesis pathway.</text>
</comment>
<comment type="catalytic activity">
    <reaction evidence="1">
        <text>1D-myo-inositol 3-phosphate + UDP-N-acetyl-alpha-D-glucosamine = 1D-myo-inositol 2-acetamido-2-deoxy-alpha-D-glucopyranoside 3-phosphate + UDP + H(+)</text>
        <dbReference type="Rhea" id="RHEA:26188"/>
        <dbReference type="ChEBI" id="CHEBI:15378"/>
        <dbReference type="ChEBI" id="CHEBI:57705"/>
        <dbReference type="ChEBI" id="CHEBI:58223"/>
        <dbReference type="ChEBI" id="CHEBI:58401"/>
        <dbReference type="ChEBI" id="CHEBI:58892"/>
        <dbReference type="EC" id="2.4.1.250"/>
    </reaction>
</comment>
<comment type="subunit">
    <text evidence="1">Homodimer.</text>
</comment>
<comment type="similarity">
    <text evidence="1">Belongs to the glycosyltransferase group 1 family. MshA subfamily.</text>
</comment>